<organism>
    <name type="scientific">Aspergillus fumigatus (strain ATCC MYA-4609 / CBS 101355 / FGSC A1100 / Af293)</name>
    <name type="common">Neosartorya fumigata</name>
    <dbReference type="NCBI Taxonomy" id="330879"/>
    <lineage>
        <taxon>Eukaryota</taxon>
        <taxon>Fungi</taxon>
        <taxon>Dikarya</taxon>
        <taxon>Ascomycota</taxon>
        <taxon>Pezizomycotina</taxon>
        <taxon>Eurotiomycetes</taxon>
        <taxon>Eurotiomycetidae</taxon>
        <taxon>Eurotiales</taxon>
        <taxon>Aspergillaceae</taxon>
        <taxon>Aspergillus</taxon>
        <taxon>Aspergillus subgen. Fumigati</taxon>
    </lineage>
</organism>
<reference key="1">
    <citation type="journal article" date="2005" name="Nature">
        <title>Genomic sequence of the pathogenic and allergenic filamentous fungus Aspergillus fumigatus.</title>
        <authorList>
            <person name="Nierman W.C."/>
            <person name="Pain A."/>
            <person name="Anderson M.J."/>
            <person name="Wortman J.R."/>
            <person name="Kim H.S."/>
            <person name="Arroyo J."/>
            <person name="Berriman M."/>
            <person name="Abe K."/>
            <person name="Archer D.B."/>
            <person name="Bermejo C."/>
            <person name="Bennett J.W."/>
            <person name="Bowyer P."/>
            <person name="Chen D."/>
            <person name="Collins M."/>
            <person name="Coulsen R."/>
            <person name="Davies R."/>
            <person name="Dyer P.S."/>
            <person name="Farman M.L."/>
            <person name="Fedorova N."/>
            <person name="Fedorova N.D."/>
            <person name="Feldblyum T.V."/>
            <person name="Fischer R."/>
            <person name="Fosker N."/>
            <person name="Fraser A."/>
            <person name="Garcia J.L."/>
            <person name="Garcia M.J."/>
            <person name="Goble A."/>
            <person name="Goldman G.H."/>
            <person name="Gomi K."/>
            <person name="Griffith-Jones S."/>
            <person name="Gwilliam R."/>
            <person name="Haas B.J."/>
            <person name="Haas H."/>
            <person name="Harris D.E."/>
            <person name="Horiuchi H."/>
            <person name="Huang J."/>
            <person name="Humphray S."/>
            <person name="Jimenez J."/>
            <person name="Keller N."/>
            <person name="Khouri H."/>
            <person name="Kitamoto K."/>
            <person name="Kobayashi T."/>
            <person name="Konzack S."/>
            <person name="Kulkarni R."/>
            <person name="Kumagai T."/>
            <person name="Lafton A."/>
            <person name="Latge J.-P."/>
            <person name="Li W."/>
            <person name="Lord A."/>
            <person name="Lu C."/>
            <person name="Majoros W.H."/>
            <person name="May G.S."/>
            <person name="Miller B.L."/>
            <person name="Mohamoud Y."/>
            <person name="Molina M."/>
            <person name="Monod M."/>
            <person name="Mouyna I."/>
            <person name="Mulligan S."/>
            <person name="Murphy L.D."/>
            <person name="O'Neil S."/>
            <person name="Paulsen I."/>
            <person name="Penalva M.A."/>
            <person name="Pertea M."/>
            <person name="Price C."/>
            <person name="Pritchard B.L."/>
            <person name="Quail M.A."/>
            <person name="Rabbinowitsch E."/>
            <person name="Rawlins N."/>
            <person name="Rajandream M.A."/>
            <person name="Reichard U."/>
            <person name="Renauld H."/>
            <person name="Robson G.D."/>
            <person name="Rodriguez de Cordoba S."/>
            <person name="Rodriguez-Pena J.M."/>
            <person name="Ronning C.M."/>
            <person name="Rutter S."/>
            <person name="Salzberg S.L."/>
            <person name="Sanchez M."/>
            <person name="Sanchez-Ferrero J.C."/>
            <person name="Saunders D."/>
            <person name="Seeger K."/>
            <person name="Squares R."/>
            <person name="Squares S."/>
            <person name="Takeuchi M."/>
            <person name="Tekaia F."/>
            <person name="Turner G."/>
            <person name="Vazquez de Aldana C.R."/>
            <person name="Weidman J."/>
            <person name="White O."/>
            <person name="Woodward J.R."/>
            <person name="Yu J.-H."/>
            <person name="Fraser C.M."/>
            <person name="Galagan J.E."/>
            <person name="Asai K."/>
            <person name="Machida M."/>
            <person name="Hall N."/>
            <person name="Barrell B.G."/>
            <person name="Denning D.W."/>
        </authorList>
    </citation>
    <scope>NUCLEOTIDE SEQUENCE [LARGE SCALE GENOMIC DNA]</scope>
    <source>
        <strain>ATCC MYA-4609 / CBS 101355 / FGSC A1100 / Af293</strain>
    </source>
</reference>
<reference key="2">
    <citation type="journal article" date="2004" name="Biochim. Biophys. Acta">
        <title>Purification and characterization of two forms of endo-beta-1,4-mannanase from a thermotolerant fungus, Aspergillus fumigatus IMI 385708 (formerly Thermomyces lanuginosus IMI 158749).</title>
        <authorList>
            <person name="Puchart V."/>
            <person name="Vrsanska M."/>
            <person name="Svoboda P."/>
            <person name="Pohl J."/>
            <person name="Ogel Z.B."/>
            <person name="Biely P."/>
        </authorList>
    </citation>
    <scope>NUCLEOTIDE SEQUENCE [GENOMIC DNA] OF 11-438</scope>
    <scope>PROTEIN SEQUENCE OF 18-29; 113-133 AND 325-347</scope>
    <scope>FUNCTION</scope>
    <scope>BIOPHYSICOCHEMICAL PROPERTIES</scope>
    <source>
        <strain>IMI 385708</strain>
    </source>
</reference>
<reference key="3">
    <citation type="journal article" date="2009" name="Biotechnol. Prog.">
        <title>Cloning, expression and characterization of endo-beta-1,4-mannanase from Aspergillus fumigatus in Aspergillus sojae and Pichia pastoris.</title>
        <authorList>
            <person name="Duruksu G."/>
            <person name="Ozturk B."/>
            <person name="Biely P."/>
            <person name="Bakir U."/>
            <person name="Ogel Z.B."/>
        </authorList>
    </citation>
    <scope>NUCLEOTIDE SEQUENCE [MRNA] OF 18-438</scope>
    <scope>FUNCTION</scope>
    <scope>BIOPHYSICOCHEMICAL PROPERTIES</scope>
    <source>
        <strain>IMI 385708</strain>
    </source>
</reference>
<protein>
    <recommendedName>
        <fullName>Mannan endo-1,4-beta-mannosidase F</fullName>
        <ecNumber>3.2.1.78</ecNumber>
    </recommendedName>
    <alternativeName>
        <fullName>Endo-beta-1,4-mannanase F</fullName>
    </alternativeName>
</protein>
<evidence type="ECO:0000250" key="1"/>
<evidence type="ECO:0000250" key="2">
    <source>
        <dbReference type="UniProtKB" id="B4XC07"/>
    </source>
</evidence>
<evidence type="ECO:0000250" key="3">
    <source>
        <dbReference type="UniProtKB" id="Q99036"/>
    </source>
</evidence>
<evidence type="ECO:0000255" key="4"/>
<evidence type="ECO:0000255" key="5">
    <source>
        <dbReference type="PROSITE-ProRule" id="PRU00597"/>
    </source>
</evidence>
<evidence type="ECO:0000256" key="6">
    <source>
        <dbReference type="SAM" id="MobiDB-lite"/>
    </source>
</evidence>
<evidence type="ECO:0000269" key="7">
    <source>
    </source>
</evidence>
<evidence type="ECO:0000269" key="8">
    <source>
    </source>
</evidence>
<evidence type="ECO:0000305" key="9"/>
<sequence length="438" mass="47327">MHPLPSVALLSAIGAVAAQVGPWGQCGGRSYTGETSCVSGWSCVLFNEWYSQCQPATTTSTSSVSATAAPSSTSSSKESVPSATTSKKPVPTGSSSFVKADGLKFNIDGETKYFAGTNAYWLPFLTNDADVDSVMDNLQKAGLKILRTWGFNDVNSKPSSGTVYFQLHDPSTGTTTINTGADGLQRLDYVVSAAEKRGIKLLIPLVNNWDDYGGMNAYVKAYGGSKTEWYTNSKIQSVYQAYIKAVVSRYRDSPAIMAWELSNEARCQGCSTDVIYNWTAKTSAYIKSLDPNHMVATGDEGMGVTVDSDGSYPYSTYEGSDFAKNLAAPDIDFGVFHLYTEDWGIKDNSWGNGWVTSHAKVCKAAGKPCLFEEYGLKDDHCSASLTWQKTSVSSGMAADLFWQYGQTLSTGPSPNDHFTIYYGTSDWQCGVADHLSTL</sequence>
<comment type="function">
    <text evidence="7 8">Endo-1,4-mannanase, a crucial enzyme for depolymerization of seed galactomannans and wood galactoglucomannans.</text>
</comment>
<comment type="catalytic activity">
    <reaction>
        <text>Random hydrolysis of (1-&gt;4)-beta-D-mannosidic linkages in mannans, galactomannans and glucomannans.</text>
        <dbReference type="EC" id="3.2.1.78"/>
    </reaction>
</comment>
<comment type="biophysicochemical properties">
    <kinetics>
        <KM evidence="7 8">3.07 mM for locust bean galactomannan</KM>
        <Vmax evidence="7 8">1935.0 umol/min/mg enzyme</Vmax>
    </kinetics>
    <phDependence>
        <text evidence="7 8">Optimum pH is 4.0 to 5.0.</text>
    </phDependence>
    <temperatureDependence>
        <text evidence="7 8">Optimum temperature is 65 degrees Celsius. Stable up to 55 degrees Celsius.</text>
    </temperatureDependence>
</comment>
<comment type="subcellular location">
    <subcellularLocation>
        <location evidence="1">Secreted</location>
    </subcellularLocation>
</comment>
<comment type="domain">
    <text>Has a modular structure: a carbohydrate-binding module (CBM) at the N-terminus, a linker rich in serines, and a C-terminal endo-1,4-mannanase catalytic module. The genes for catalytic modules and CBMs seem to have evolved separately and have been linked by gene fusion.</text>
</comment>
<comment type="similarity">
    <text evidence="9">Belongs to the glycosyl hydrolase 5 (cellulase A) family.</text>
</comment>
<comment type="sequence caution" evidence="9">
    <conflict type="erroneous initiation">
        <sequence resource="EMBL-CDS" id="EAL85463"/>
    </conflict>
    <text>Extended N-terminus.</text>
</comment>
<gene>
    <name type="primary">manF</name>
    <name type="ORF">AFUA_8G07030</name>
</gene>
<feature type="signal peptide" evidence="7">
    <location>
        <begin position="1"/>
        <end position="17"/>
    </location>
</feature>
<feature type="chain" id="PRO_0000393715" description="Mannan endo-1,4-beta-mannosidase F">
    <location>
        <begin position="18"/>
        <end position="438"/>
    </location>
</feature>
<feature type="domain" description="CBM1" evidence="5">
    <location>
        <begin position="19"/>
        <end position="54"/>
    </location>
</feature>
<feature type="region of interest" description="Ser-rich linker">
    <location>
        <begin position="60"/>
        <end position="96"/>
    </location>
</feature>
<feature type="region of interest" description="Disordered" evidence="6">
    <location>
        <begin position="61"/>
        <end position="92"/>
    </location>
</feature>
<feature type="region of interest" description="Catalytic">
    <location>
        <begin position="97"/>
        <end position="438"/>
    </location>
</feature>
<feature type="compositionally biased region" description="Low complexity" evidence="6">
    <location>
        <begin position="61"/>
        <end position="86"/>
    </location>
</feature>
<feature type="active site" description="Proton donor" evidence="3">
    <location>
        <position position="264"/>
    </location>
</feature>
<feature type="active site" description="Nucleophile" evidence="3">
    <location>
        <position position="373"/>
    </location>
</feature>
<feature type="binding site" evidence="2">
    <location>
        <position position="149"/>
    </location>
    <ligand>
        <name>substrate</name>
    </ligand>
</feature>
<feature type="binding site" evidence="2">
    <location>
        <position position="263"/>
    </location>
    <ligand>
        <name>substrate</name>
    </ligand>
</feature>
<feature type="binding site" evidence="2">
    <location>
        <position position="339"/>
    </location>
    <ligand>
        <name>substrate</name>
    </ligand>
</feature>
<feature type="binding site" evidence="2">
    <location>
        <position position="402"/>
    </location>
    <ligand>
        <name>substrate</name>
    </ligand>
</feature>
<feature type="glycosylation site" description="N-linked (GlcNAc...) asparagine" evidence="4">
    <location>
        <position position="277"/>
    </location>
</feature>
<feature type="sequence conflict" description="In Ref. 2; ACH58410." evidence="9" ref="2">
    <original>GAVA</original>
    <variation>IYGS</variation>
    <location>
        <begin position="14"/>
        <end position="17"/>
    </location>
</feature>
<feature type="sequence conflict" description="In Ref. 3; ACH58411." evidence="9" ref="3">
    <original>A</original>
    <variation>S</variation>
    <location>
        <position position="83"/>
    </location>
</feature>
<feature type="sequence conflict" description="In Ref. 3; ACH58411." evidence="9" ref="3">
    <original>KIQ</original>
    <variation>QIP</variation>
    <location>
        <begin position="234"/>
        <end position="236"/>
    </location>
</feature>
<feature type="sequence conflict" description="In Ref. 3; ACH58411." evidence="9" ref="3">
    <original>P</original>
    <variation>L</variation>
    <location>
        <position position="254"/>
    </location>
</feature>
<feature type="sequence conflict" description="In Ref. 3; ACH58411." evidence="9" ref="3">
    <original>T</original>
    <variation>A</variation>
    <location>
        <position position="279"/>
    </location>
</feature>
<feature type="sequence conflict" description="In Ref. 3; ACH58411." evidence="9" ref="3">
    <original>L</original>
    <variation>P</variation>
    <location>
        <position position="385"/>
    </location>
</feature>
<name>MANF_ASPFU</name>
<keyword id="KW-0119">Carbohydrate metabolism</keyword>
<keyword id="KW-0903">Direct protein sequencing</keyword>
<keyword id="KW-0325">Glycoprotein</keyword>
<keyword id="KW-0326">Glycosidase</keyword>
<keyword id="KW-0378">Hydrolase</keyword>
<keyword id="KW-1185">Reference proteome</keyword>
<keyword id="KW-0964">Secreted</keyword>
<keyword id="KW-0732">Signal</keyword>
<accession>Q4WBS1</accession>
<accession>B5LZ77</accession>
<accession>B5LZ78</accession>
<dbReference type="EC" id="3.2.1.78"/>
<dbReference type="EMBL" id="AAHF01000013">
    <property type="protein sequence ID" value="EAL85463.1"/>
    <property type="status" value="ALT_INIT"/>
    <property type="molecule type" value="Genomic_DNA"/>
</dbReference>
<dbReference type="EMBL" id="EU925594">
    <property type="protein sequence ID" value="ACH58410.1"/>
    <property type="molecule type" value="Genomic_DNA"/>
</dbReference>
<dbReference type="EMBL" id="EU925595">
    <property type="protein sequence ID" value="ACH58411.1"/>
    <property type="molecule type" value="mRNA"/>
</dbReference>
<dbReference type="RefSeq" id="XP_747501.1">
    <property type="nucleotide sequence ID" value="XM_742408.1"/>
</dbReference>
<dbReference type="SMR" id="Q4WBS1"/>
<dbReference type="STRING" id="330879.Q4WBS1"/>
<dbReference type="CAZy" id="CBM1">
    <property type="family name" value="Carbohydrate-Binding Module Family 1"/>
</dbReference>
<dbReference type="CAZy" id="GH5">
    <property type="family name" value="Glycoside Hydrolase Family 5"/>
</dbReference>
<dbReference type="GlyCosmos" id="Q4WBS1">
    <property type="glycosylation" value="1 site, No reported glycans"/>
</dbReference>
<dbReference type="GeneID" id="3504904"/>
<dbReference type="KEGG" id="afm:AFUA_8G07030"/>
<dbReference type="eggNOG" id="ENOG502QS4Q">
    <property type="taxonomic scope" value="Eukaryota"/>
</dbReference>
<dbReference type="HOGENOM" id="CLU_031603_4_1_1"/>
<dbReference type="InParanoid" id="Q4WBS1"/>
<dbReference type="OrthoDB" id="406631at2759"/>
<dbReference type="BRENDA" id="3.2.1.78">
    <property type="organism ID" value="508"/>
</dbReference>
<dbReference type="Proteomes" id="UP000002530">
    <property type="component" value="Chromosome 8"/>
</dbReference>
<dbReference type="GO" id="GO:0005576">
    <property type="term" value="C:extracellular region"/>
    <property type="evidence" value="ECO:0007669"/>
    <property type="project" value="UniProtKB-SubCell"/>
</dbReference>
<dbReference type="GO" id="GO:0030248">
    <property type="term" value="F:cellulose binding"/>
    <property type="evidence" value="ECO:0007669"/>
    <property type="project" value="InterPro"/>
</dbReference>
<dbReference type="GO" id="GO:0016985">
    <property type="term" value="F:mannan endo-1,4-beta-mannosidase activity"/>
    <property type="evidence" value="ECO:0000318"/>
    <property type="project" value="GO_Central"/>
</dbReference>
<dbReference type="GO" id="GO:0046355">
    <property type="term" value="P:mannan catabolic process"/>
    <property type="evidence" value="ECO:0007669"/>
    <property type="project" value="UniProtKB-ARBA"/>
</dbReference>
<dbReference type="FunFam" id="3.20.20.80:FF:000076">
    <property type="entry name" value="Mannan endo-1,4-beta-mannosidase A"/>
    <property type="match status" value="1"/>
</dbReference>
<dbReference type="Gene3D" id="3.20.20.80">
    <property type="entry name" value="Glycosidases"/>
    <property type="match status" value="1"/>
</dbReference>
<dbReference type="InterPro" id="IPR035971">
    <property type="entry name" value="CBD_sf"/>
</dbReference>
<dbReference type="InterPro" id="IPR000254">
    <property type="entry name" value="Cellulose-bd_dom_fun"/>
</dbReference>
<dbReference type="InterPro" id="IPR001547">
    <property type="entry name" value="Glyco_hydro_5"/>
</dbReference>
<dbReference type="InterPro" id="IPR017853">
    <property type="entry name" value="Glycoside_hydrolase_SF"/>
</dbReference>
<dbReference type="InterPro" id="IPR045053">
    <property type="entry name" value="MAN-like"/>
</dbReference>
<dbReference type="PANTHER" id="PTHR31451">
    <property type="match status" value="1"/>
</dbReference>
<dbReference type="PANTHER" id="PTHR31451:SF57">
    <property type="entry name" value="BETA-1,4-ENDOGLUCANASE (EUROFUNG)-RELATED"/>
    <property type="match status" value="1"/>
</dbReference>
<dbReference type="Pfam" id="PF00734">
    <property type="entry name" value="CBM_1"/>
    <property type="match status" value="1"/>
</dbReference>
<dbReference type="Pfam" id="PF00150">
    <property type="entry name" value="Cellulase"/>
    <property type="match status" value="1"/>
</dbReference>
<dbReference type="SMART" id="SM00236">
    <property type="entry name" value="fCBD"/>
    <property type="match status" value="1"/>
</dbReference>
<dbReference type="SUPFAM" id="SSF51445">
    <property type="entry name" value="(Trans)glycosidases"/>
    <property type="match status" value="1"/>
</dbReference>
<dbReference type="SUPFAM" id="SSF57180">
    <property type="entry name" value="Cellulose-binding domain"/>
    <property type="match status" value="1"/>
</dbReference>
<dbReference type="PROSITE" id="PS00562">
    <property type="entry name" value="CBM1_1"/>
    <property type="match status" value="1"/>
</dbReference>
<dbReference type="PROSITE" id="PS51164">
    <property type="entry name" value="CBM1_2"/>
    <property type="match status" value="1"/>
</dbReference>
<proteinExistence type="evidence at protein level"/>